<feature type="chain" id="PRO_0000368769" description="ATP synthase subunit b">
    <location>
        <begin position="1"/>
        <end position="156"/>
    </location>
</feature>
<feature type="transmembrane region" description="Helical" evidence="1">
    <location>
        <begin position="13"/>
        <end position="33"/>
    </location>
</feature>
<dbReference type="EMBL" id="CP000961">
    <property type="protein sequence ID" value="ACA89151.1"/>
    <property type="molecule type" value="Genomic_DNA"/>
</dbReference>
<dbReference type="RefSeq" id="WP_012327468.1">
    <property type="nucleotide sequence ID" value="NC_010506.1"/>
</dbReference>
<dbReference type="SMR" id="B1KQ38"/>
<dbReference type="STRING" id="392500.Swoo_4902"/>
<dbReference type="KEGG" id="swd:Swoo_4902"/>
<dbReference type="eggNOG" id="COG0711">
    <property type="taxonomic scope" value="Bacteria"/>
</dbReference>
<dbReference type="HOGENOM" id="CLU_079215_4_5_6"/>
<dbReference type="Proteomes" id="UP000002168">
    <property type="component" value="Chromosome"/>
</dbReference>
<dbReference type="GO" id="GO:0005886">
    <property type="term" value="C:plasma membrane"/>
    <property type="evidence" value="ECO:0007669"/>
    <property type="project" value="UniProtKB-SubCell"/>
</dbReference>
<dbReference type="GO" id="GO:0045259">
    <property type="term" value="C:proton-transporting ATP synthase complex"/>
    <property type="evidence" value="ECO:0007669"/>
    <property type="project" value="UniProtKB-KW"/>
</dbReference>
<dbReference type="GO" id="GO:0046933">
    <property type="term" value="F:proton-transporting ATP synthase activity, rotational mechanism"/>
    <property type="evidence" value="ECO:0007669"/>
    <property type="project" value="UniProtKB-UniRule"/>
</dbReference>
<dbReference type="GO" id="GO:0046961">
    <property type="term" value="F:proton-transporting ATPase activity, rotational mechanism"/>
    <property type="evidence" value="ECO:0007669"/>
    <property type="project" value="TreeGrafter"/>
</dbReference>
<dbReference type="CDD" id="cd06503">
    <property type="entry name" value="ATP-synt_Fo_b"/>
    <property type="match status" value="1"/>
</dbReference>
<dbReference type="FunFam" id="1.20.5.620:FF:000001">
    <property type="entry name" value="ATP synthase subunit b"/>
    <property type="match status" value="1"/>
</dbReference>
<dbReference type="Gene3D" id="1.20.5.620">
    <property type="entry name" value="F1F0 ATP synthase subunit B, membrane domain"/>
    <property type="match status" value="1"/>
</dbReference>
<dbReference type="HAMAP" id="MF_01398">
    <property type="entry name" value="ATP_synth_b_bprime"/>
    <property type="match status" value="1"/>
</dbReference>
<dbReference type="InterPro" id="IPR028987">
    <property type="entry name" value="ATP_synth_B-like_membr_sf"/>
</dbReference>
<dbReference type="InterPro" id="IPR002146">
    <property type="entry name" value="ATP_synth_b/b'su_bac/chlpt"/>
</dbReference>
<dbReference type="InterPro" id="IPR005864">
    <property type="entry name" value="ATP_synth_F0_bsu_bac"/>
</dbReference>
<dbReference type="InterPro" id="IPR050059">
    <property type="entry name" value="ATP_synthase_B_chain"/>
</dbReference>
<dbReference type="NCBIfam" id="TIGR01144">
    <property type="entry name" value="ATP_synt_b"/>
    <property type="match status" value="1"/>
</dbReference>
<dbReference type="NCBIfam" id="NF004411">
    <property type="entry name" value="PRK05759.1-2"/>
    <property type="match status" value="1"/>
</dbReference>
<dbReference type="NCBIfam" id="NF004413">
    <property type="entry name" value="PRK05759.1-4"/>
    <property type="match status" value="1"/>
</dbReference>
<dbReference type="PANTHER" id="PTHR33445:SF1">
    <property type="entry name" value="ATP SYNTHASE SUBUNIT B"/>
    <property type="match status" value="1"/>
</dbReference>
<dbReference type="PANTHER" id="PTHR33445">
    <property type="entry name" value="ATP SYNTHASE SUBUNIT B', CHLOROPLASTIC"/>
    <property type="match status" value="1"/>
</dbReference>
<dbReference type="Pfam" id="PF00430">
    <property type="entry name" value="ATP-synt_B"/>
    <property type="match status" value="1"/>
</dbReference>
<dbReference type="SUPFAM" id="SSF81573">
    <property type="entry name" value="F1F0 ATP synthase subunit B, membrane domain"/>
    <property type="match status" value="1"/>
</dbReference>
<comment type="function">
    <text evidence="1">F(1)F(0) ATP synthase produces ATP from ADP in the presence of a proton or sodium gradient. F-type ATPases consist of two structural domains, F(1) containing the extramembraneous catalytic core and F(0) containing the membrane proton channel, linked together by a central stalk and a peripheral stalk. During catalysis, ATP synthesis in the catalytic domain of F(1) is coupled via a rotary mechanism of the central stalk subunits to proton translocation.</text>
</comment>
<comment type="function">
    <text evidence="1">Component of the F(0) channel, it forms part of the peripheral stalk, linking F(1) to F(0).</text>
</comment>
<comment type="subunit">
    <text evidence="1">F-type ATPases have 2 components, F(1) - the catalytic core - and F(0) - the membrane proton channel. F(1) has five subunits: alpha(3), beta(3), gamma(1), delta(1), epsilon(1). F(0) has three main subunits: a(1), b(2) and c(10-14). The alpha and beta chains form an alternating ring which encloses part of the gamma chain. F(1) is attached to F(0) by a central stalk formed by the gamma and epsilon chains, while a peripheral stalk is formed by the delta and b chains.</text>
</comment>
<comment type="subcellular location">
    <subcellularLocation>
        <location evidence="1">Cell inner membrane</location>
        <topology evidence="1">Single-pass membrane protein</topology>
    </subcellularLocation>
</comment>
<comment type="similarity">
    <text evidence="1">Belongs to the ATPase B chain family.</text>
</comment>
<protein>
    <recommendedName>
        <fullName evidence="1">ATP synthase subunit b</fullName>
    </recommendedName>
    <alternativeName>
        <fullName evidence="1">ATP synthase F(0) sector subunit b</fullName>
    </alternativeName>
    <alternativeName>
        <fullName evidence="1">ATPase subunit I</fullName>
    </alternativeName>
    <alternativeName>
        <fullName evidence="1">F-type ATPase subunit b</fullName>
        <shortName evidence="1">F-ATPase subunit b</shortName>
    </alternativeName>
</protein>
<name>ATPF_SHEWM</name>
<gene>
    <name evidence="1" type="primary">atpF</name>
    <name type="ordered locus">Swoo_4902</name>
</gene>
<keyword id="KW-0066">ATP synthesis</keyword>
<keyword id="KW-0997">Cell inner membrane</keyword>
<keyword id="KW-1003">Cell membrane</keyword>
<keyword id="KW-0138">CF(0)</keyword>
<keyword id="KW-0375">Hydrogen ion transport</keyword>
<keyword id="KW-0406">Ion transport</keyword>
<keyword id="KW-0472">Membrane</keyword>
<keyword id="KW-1185">Reference proteome</keyword>
<keyword id="KW-0812">Transmembrane</keyword>
<keyword id="KW-1133">Transmembrane helix</keyword>
<keyword id="KW-0813">Transport</keyword>
<organism>
    <name type="scientific">Shewanella woodyi (strain ATCC 51908 / MS32)</name>
    <dbReference type="NCBI Taxonomy" id="392500"/>
    <lineage>
        <taxon>Bacteria</taxon>
        <taxon>Pseudomonadati</taxon>
        <taxon>Pseudomonadota</taxon>
        <taxon>Gammaproteobacteria</taxon>
        <taxon>Alteromonadales</taxon>
        <taxon>Shewanellaceae</taxon>
        <taxon>Shewanella</taxon>
    </lineage>
</organism>
<evidence type="ECO:0000255" key="1">
    <source>
        <dbReference type="HAMAP-Rule" id="MF_01398"/>
    </source>
</evidence>
<reference key="1">
    <citation type="submission" date="2008-02" db="EMBL/GenBank/DDBJ databases">
        <title>Complete sequence of Shewanella woodyi ATCC 51908.</title>
        <authorList>
            <consortium name="US DOE Joint Genome Institute"/>
            <person name="Copeland A."/>
            <person name="Lucas S."/>
            <person name="Lapidus A."/>
            <person name="Glavina del Rio T."/>
            <person name="Dalin E."/>
            <person name="Tice H."/>
            <person name="Bruce D."/>
            <person name="Goodwin L."/>
            <person name="Pitluck S."/>
            <person name="Sims D."/>
            <person name="Brettin T."/>
            <person name="Detter J.C."/>
            <person name="Han C."/>
            <person name="Kuske C.R."/>
            <person name="Schmutz J."/>
            <person name="Larimer F."/>
            <person name="Land M."/>
            <person name="Hauser L."/>
            <person name="Kyrpides N."/>
            <person name="Lykidis A."/>
            <person name="Zhao J.-S."/>
            <person name="Richardson P."/>
        </authorList>
    </citation>
    <scope>NUCLEOTIDE SEQUENCE [LARGE SCALE GENOMIC DNA]</scope>
    <source>
        <strain>ATCC 51908 / MS32</strain>
    </source>
</reference>
<proteinExistence type="inferred from homology"/>
<sequence>MNINATLLGQTVAFIIFVWFCMKFVWPPLMNAIEERQKRIADGLADADRAVKDLELAQAKATDQLKDAKATANEIIEQANKRKAQIVDEAKAEADAERAKIIAQGQAEIEAERNRVKEDLRKQVATLAIAGAEKILERSIDEAAHSDIVNKLVAEL</sequence>
<accession>B1KQ38</accession>